<proteinExistence type="predicted"/>
<organism>
    <name type="scientific">Acanthamoeba polyphaga mimivirus</name>
    <name type="common">APMV</name>
    <dbReference type="NCBI Taxonomy" id="212035"/>
    <lineage>
        <taxon>Viruses</taxon>
        <taxon>Varidnaviria</taxon>
        <taxon>Bamfordvirae</taxon>
        <taxon>Nucleocytoviricota</taxon>
        <taxon>Megaviricetes</taxon>
        <taxon>Imitervirales</taxon>
        <taxon>Mimiviridae</taxon>
        <taxon>Megamimivirinae</taxon>
        <taxon>Mimivirus</taxon>
        <taxon>Mimivirus bradfordmassiliense</taxon>
    </lineage>
</organism>
<dbReference type="EMBL" id="AY653733">
    <property type="protein sequence ID" value="AAV51064.1"/>
    <property type="molecule type" value="Genomic_DNA"/>
</dbReference>
<dbReference type="KEGG" id="vg:9925466"/>
<dbReference type="OrthoDB" id="35786at10239"/>
<dbReference type="Proteomes" id="UP000001134">
    <property type="component" value="Genome"/>
</dbReference>
<sequence>MYNNYTDDNLVTSSTNYLIIDSISDSISDSISDSTNNLIHNPENNFEKKYTNIITKGKNYTKSTDFIVKIVYFEVIDGVCDRNKSSKKIVGKFIHGGIINTEIPVRSKIRKIILETICEDIKESCKYRFDYYHYKSNPKKIIIKFKNGELYPIIKINSKNATYRTTKKIKHRQTKYVNKKNQCILF</sequence>
<protein>
    <recommendedName>
        <fullName>Uncharacterized protein R804</fullName>
    </recommendedName>
</protein>
<gene>
    <name type="ordered locus">MIMI_R804</name>
</gene>
<feature type="chain" id="PRO_0000071359" description="Uncharacterized protein R804">
    <location>
        <begin position="1"/>
        <end position="186"/>
    </location>
</feature>
<organismHost>
    <name type="scientific">Acanthamoeba polyphaga</name>
    <name type="common">Amoeba</name>
    <dbReference type="NCBI Taxonomy" id="5757"/>
</organismHost>
<keyword id="KW-1185">Reference proteome</keyword>
<accession>Q5UR58</accession>
<reference key="1">
    <citation type="journal article" date="2004" name="Science">
        <title>The 1.2-megabase genome sequence of Mimivirus.</title>
        <authorList>
            <person name="Raoult D."/>
            <person name="Audic S."/>
            <person name="Robert C."/>
            <person name="Abergel C."/>
            <person name="Renesto P."/>
            <person name="Ogata H."/>
            <person name="La Scola B."/>
            <person name="Susan M."/>
            <person name="Claverie J.-M."/>
        </authorList>
    </citation>
    <scope>NUCLEOTIDE SEQUENCE [LARGE SCALE GENOMIC DNA]</scope>
    <source>
        <strain>Rowbotham-Bradford</strain>
    </source>
</reference>
<name>YR804_MIMIV</name>